<proteinExistence type="inferred from homology"/>
<protein>
    <recommendedName>
        <fullName evidence="1">Lipoprotein signal peptidase</fullName>
        <ecNumber evidence="1">3.4.23.36</ecNumber>
    </recommendedName>
    <alternativeName>
        <fullName evidence="1">Prolipoprotein signal peptidase</fullName>
    </alternativeName>
    <alternativeName>
        <fullName evidence="1">Signal peptidase II</fullName>
        <shortName evidence="1">SPase II</shortName>
    </alternativeName>
</protein>
<reference key="1">
    <citation type="journal article" date="2001" name="Lancet">
        <title>Whole genome sequencing of meticillin-resistant Staphylococcus aureus.</title>
        <authorList>
            <person name="Kuroda M."/>
            <person name="Ohta T."/>
            <person name="Uchiyama I."/>
            <person name="Baba T."/>
            <person name="Yuzawa H."/>
            <person name="Kobayashi I."/>
            <person name="Cui L."/>
            <person name="Oguchi A."/>
            <person name="Aoki K."/>
            <person name="Nagai Y."/>
            <person name="Lian J.-Q."/>
            <person name="Ito T."/>
            <person name="Kanamori M."/>
            <person name="Matsumaru H."/>
            <person name="Maruyama A."/>
            <person name="Murakami H."/>
            <person name="Hosoyama A."/>
            <person name="Mizutani-Ui Y."/>
            <person name="Takahashi N.K."/>
            <person name="Sawano T."/>
            <person name="Inoue R."/>
            <person name="Kaito C."/>
            <person name="Sekimizu K."/>
            <person name="Hirakawa H."/>
            <person name="Kuhara S."/>
            <person name="Goto S."/>
            <person name="Yabuzaki J."/>
            <person name="Kanehisa M."/>
            <person name="Yamashita A."/>
            <person name="Oshima K."/>
            <person name="Furuya K."/>
            <person name="Yoshino C."/>
            <person name="Shiba T."/>
            <person name="Hattori M."/>
            <person name="Ogasawara N."/>
            <person name="Hayashi H."/>
            <person name="Hiramatsu K."/>
        </authorList>
    </citation>
    <scope>NUCLEOTIDE SEQUENCE [LARGE SCALE GENOMIC DNA]</scope>
    <source>
        <strain>N315</strain>
    </source>
</reference>
<evidence type="ECO:0000255" key="1">
    <source>
        <dbReference type="HAMAP-Rule" id="MF_00161"/>
    </source>
</evidence>
<feature type="chain" id="PRO_0000178814" description="Lipoprotein signal peptidase">
    <location>
        <begin position="1"/>
        <end position="163"/>
    </location>
</feature>
<feature type="transmembrane region" description="Helical" evidence="1">
    <location>
        <begin position="11"/>
        <end position="31"/>
    </location>
</feature>
<feature type="transmembrane region" description="Helical" evidence="1">
    <location>
        <begin position="63"/>
        <end position="83"/>
    </location>
</feature>
<feature type="transmembrane region" description="Helical" evidence="1">
    <location>
        <begin position="88"/>
        <end position="108"/>
    </location>
</feature>
<feature type="transmembrane region" description="Helical" evidence="1">
    <location>
        <begin position="131"/>
        <end position="151"/>
    </location>
</feature>
<feature type="active site" evidence="1">
    <location>
        <position position="118"/>
    </location>
</feature>
<feature type="active site" evidence="1">
    <location>
        <position position="136"/>
    </location>
</feature>
<dbReference type="EC" id="3.4.23.36" evidence="1"/>
<dbReference type="EMBL" id="BA000018">
    <property type="protein sequence ID" value="BAB42291.1"/>
    <property type="molecule type" value="Genomic_DNA"/>
</dbReference>
<dbReference type="PIR" id="G89891">
    <property type="entry name" value="G89891"/>
</dbReference>
<dbReference type="RefSeq" id="WP_000549207.1">
    <property type="nucleotide sequence ID" value="NC_002745.2"/>
</dbReference>
<dbReference type="SMR" id="P65267"/>
<dbReference type="EnsemblBacteria" id="BAB42291">
    <property type="protein sequence ID" value="BAB42291"/>
    <property type="gene ID" value="BAB42291"/>
</dbReference>
<dbReference type="KEGG" id="sau:SA1039"/>
<dbReference type="HOGENOM" id="CLU_083252_3_0_9"/>
<dbReference type="UniPathway" id="UPA00665"/>
<dbReference type="GO" id="GO:0005886">
    <property type="term" value="C:plasma membrane"/>
    <property type="evidence" value="ECO:0007669"/>
    <property type="project" value="UniProtKB-SubCell"/>
</dbReference>
<dbReference type="GO" id="GO:0004190">
    <property type="term" value="F:aspartic-type endopeptidase activity"/>
    <property type="evidence" value="ECO:0007669"/>
    <property type="project" value="UniProtKB-UniRule"/>
</dbReference>
<dbReference type="GO" id="GO:0006508">
    <property type="term" value="P:proteolysis"/>
    <property type="evidence" value="ECO:0007669"/>
    <property type="project" value="UniProtKB-KW"/>
</dbReference>
<dbReference type="HAMAP" id="MF_00161">
    <property type="entry name" value="LspA"/>
    <property type="match status" value="1"/>
</dbReference>
<dbReference type="InterPro" id="IPR001872">
    <property type="entry name" value="Peptidase_A8"/>
</dbReference>
<dbReference type="NCBIfam" id="TIGR00077">
    <property type="entry name" value="lspA"/>
    <property type="match status" value="1"/>
</dbReference>
<dbReference type="PANTHER" id="PTHR33695">
    <property type="entry name" value="LIPOPROTEIN SIGNAL PEPTIDASE"/>
    <property type="match status" value="1"/>
</dbReference>
<dbReference type="PANTHER" id="PTHR33695:SF1">
    <property type="entry name" value="LIPOPROTEIN SIGNAL PEPTIDASE"/>
    <property type="match status" value="1"/>
</dbReference>
<dbReference type="Pfam" id="PF01252">
    <property type="entry name" value="Peptidase_A8"/>
    <property type="match status" value="1"/>
</dbReference>
<dbReference type="PRINTS" id="PR00781">
    <property type="entry name" value="LIPOSIGPTASE"/>
</dbReference>
<dbReference type="PROSITE" id="PS00855">
    <property type="entry name" value="SPASE_II"/>
    <property type="match status" value="1"/>
</dbReference>
<name>LSPA_STAAN</name>
<gene>
    <name evidence="1" type="primary">lspA</name>
    <name type="synonym">lsp</name>
    <name type="ordered locus">SA1039</name>
</gene>
<sequence>MHKKYFIGTSILIAVFVVIFDQVTKYIIATTMKIGDSFEVIPHFLNITSHRNNGAAWGILSGKMTFFFIITIIILIALVYFFIKDAQYNLFMQVAISLLFAGALGNFIDRILTGEVVDFIDTNIFGYDFPIFNIADSSLTIGVILIIIALLKDTSNKKEKEVK</sequence>
<comment type="function">
    <text evidence="1">This protein specifically catalyzes the removal of signal peptides from prolipoproteins.</text>
</comment>
<comment type="catalytic activity">
    <reaction evidence="1">
        <text>Release of signal peptides from bacterial membrane prolipoproteins. Hydrolyzes -Xaa-Yaa-Zaa-|-(S,diacylglyceryl)Cys-, in which Xaa is hydrophobic (preferably Leu), and Yaa (Ala or Ser) and Zaa (Gly or Ala) have small, neutral side chains.</text>
        <dbReference type="EC" id="3.4.23.36"/>
    </reaction>
</comment>
<comment type="pathway">
    <text evidence="1">Protein modification; lipoprotein biosynthesis (signal peptide cleavage).</text>
</comment>
<comment type="subcellular location">
    <subcellularLocation>
        <location evidence="1">Cell membrane</location>
        <topology evidence="1">Multi-pass membrane protein</topology>
    </subcellularLocation>
</comment>
<comment type="similarity">
    <text evidence="1">Belongs to the peptidase A8 family.</text>
</comment>
<organism>
    <name type="scientific">Staphylococcus aureus (strain N315)</name>
    <dbReference type="NCBI Taxonomy" id="158879"/>
    <lineage>
        <taxon>Bacteria</taxon>
        <taxon>Bacillati</taxon>
        <taxon>Bacillota</taxon>
        <taxon>Bacilli</taxon>
        <taxon>Bacillales</taxon>
        <taxon>Staphylococcaceae</taxon>
        <taxon>Staphylococcus</taxon>
    </lineage>
</organism>
<accession>P65267</accession>
<accession>Q99US2</accession>
<keyword id="KW-0064">Aspartyl protease</keyword>
<keyword id="KW-1003">Cell membrane</keyword>
<keyword id="KW-0378">Hydrolase</keyword>
<keyword id="KW-0472">Membrane</keyword>
<keyword id="KW-0645">Protease</keyword>
<keyword id="KW-0812">Transmembrane</keyword>
<keyword id="KW-1133">Transmembrane helix</keyword>